<feature type="chain" id="PRO_0000173984" description="Uncharacterized protein MG360">
    <location>
        <begin position="1"/>
        <end position="411"/>
    </location>
</feature>
<feature type="domain" description="UmuC" evidence="1">
    <location>
        <begin position="20"/>
        <end position="199"/>
    </location>
</feature>
<name>Y360_MYCGE</name>
<reference key="1">
    <citation type="journal article" date="1995" name="Science">
        <title>The minimal gene complement of Mycoplasma genitalium.</title>
        <authorList>
            <person name="Fraser C.M."/>
            <person name="Gocayne J.D."/>
            <person name="White O."/>
            <person name="Adams M.D."/>
            <person name="Clayton R.A."/>
            <person name="Fleischmann R.D."/>
            <person name="Bult C.J."/>
            <person name="Kerlavage A.R."/>
            <person name="Sutton G.G."/>
            <person name="Kelley J.M."/>
            <person name="Fritchman J.L."/>
            <person name="Weidman J.F."/>
            <person name="Small K.V."/>
            <person name="Sandusky M."/>
            <person name="Fuhrmann J.L."/>
            <person name="Nguyen D.T."/>
            <person name="Utterback T.R."/>
            <person name="Saudek D.M."/>
            <person name="Phillips C.A."/>
            <person name="Merrick J.M."/>
            <person name="Tomb J.-F."/>
            <person name="Dougherty B.A."/>
            <person name="Bott K.F."/>
            <person name="Hu P.-C."/>
            <person name="Lucier T.S."/>
            <person name="Peterson S.N."/>
            <person name="Smith H.O."/>
            <person name="Hutchison C.A. III"/>
            <person name="Venter J.C."/>
        </authorList>
    </citation>
    <scope>NUCLEOTIDE SEQUENCE [LARGE SCALE GENOMIC DNA]</scope>
    <source>
        <strain>ATCC 33530 / DSM 19775 / NCTC 10195 / G37</strain>
    </source>
</reference>
<dbReference type="EMBL" id="L43967">
    <property type="protein sequence ID" value="AAC71585.1"/>
    <property type="molecule type" value="Genomic_DNA"/>
</dbReference>
<dbReference type="PIR" id="H64239">
    <property type="entry name" value="H64239"/>
</dbReference>
<dbReference type="RefSeq" id="WP_010869448.1">
    <property type="nucleotide sequence ID" value="NC_000908.2"/>
</dbReference>
<dbReference type="SMR" id="Q49426"/>
<dbReference type="FunCoup" id="Q49426">
    <property type="interactions" value="188"/>
</dbReference>
<dbReference type="STRING" id="243273.MG_360"/>
<dbReference type="GeneID" id="88282543"/>
<dbReference type="KEGG" id="mge:MG_360"/>
<dbReference type="eggNOG" id="COG0389">
    <property type="taxonomic scope" value="Bacteria"/>
</dbReference>
<dbReference type="HOGENOM" id="CLU_012348_1_2_14"/>
<dbReference type="InParanoid" id="Q49426"/>
<dbReference type="OrthoDB" id="9808813at2"/>
<dbReference type="BioCyc" id="MGEN243273:G1GJ2-453-MONOMER"/>
<dbReference type="Proteomes" id="UP000000807">
    <property type="component" value="Chromosome"/>
</dbReference>
<dbReference type="GO" id="GO:0003684">
    <property type="term" value="F:damaged DNA binding"/>
    <property type="evidence" value="ECO:0007669"/>
    <property type="project" value="InterPro"/>
</dbReference>
<dbReference type="GO" id="GO:0003887">
    <property type="term" value="F:DNA-directed DNA polymerase activity"/>
    <property type="evidence" value="ECO:0000318"/>
    <property type="project" value="GO_Central"/>
</dbReference>
<dbReference type="GO" id="GO:0042276">
    <property type="term" value="P:error-prone translesion synthesis"/>
    <property type="evidence" value="ECO:0000318"/>
    <property type="project" value="GO_Central"/>
</dbReference>
<dbReference type="GO" id="GO:0009432">
    <property type="term" value="P:SOS response"/>
    <property type="evidence" value="ECO:0000318"/>
    <property type="project" value="GO_Central"/>
</dbReference>
<dbReference type="CDD" id="cd03586">
    <property type="entry name" value="PolY_Pol_IV_kappa"/>
    <property type="match status" value="1"/>
</dbReference>
<dbReference type="Gene3D" id="3.30.70.270">
    <property type="match status" value="1"/>
</dbReference>
<dbReference type="Gene3D" id="3.40.1170.60">
    <property type="match status" value="1"/>
</dbReference>
<dbReference type="Gene3D" id="3.30.1490.100">
    <property type="entry name" value="DNA polymerase, Y-family, little finger domain"/>
    <property type="match status" value="1"/>
</dbReference>
<dbReference type="InterPro" id="IPR043502">
    <property type="entry name" value="DNA/RNA_pol_sf"/>
</dbReference>
<dbReference type="InterPro" id="IPR036775">
    <property type="entry name" value="DNA_pol_Y-fam_lit_finger_sf"/>
</dbReference>
<dbReference type="InterPro" id="IPR017961">
    <property type="entry name" value="DNA_pol_Y-fam_little_finger"/>
</dbReference>
<dbReference type="InterPro" id="IPR050116">
    <property type="entry name" value="DNA_polymerase-Y"/>
</dbReference>
<dbReference type="InterPro" id="IPR022880">
    <property type="entry name" value="DNApol_IV"/>
</dbReference>
<dbReference type="InterPro" id="IPR024728">
    <property type="entry name" value="PolY_HhH_motif"/>
</dbReference>
<dbReference type="InterPro" id="IPR043128">
    <property type="entry name" value="Rev_trsase/Diguanyl_cyclase"/>
</dbReference>
<dbReference type="InterPro" id="IPR001126">
    <property type="entry name" value="UmuC"/>
</dbReference>
<dbReference type="PANTHER" id="PTHR11076:SF33">
    <property type="entry name" value="DNA POLYMERASE KAPPA"/>
    <property type="match status" value="1"/>
</dbReference>
<dbReference type="PANTHER" id="PTHR11076">
    <property type="entry name" value="DNA REPAIR POLYMERASE UMUC / TRANSFERASE FAMILY MEMBER"/>
    <property type="match status" value="1"/>
</dbReference>
<dbReference type="Pfam" id="PF00817">
    <property type="entry name" value="IMS"/>
    <property type="match status" value="1"/>
</dbReference>
<dbReference type="Pfam" id="PF11799">
    <property type="entry name" value="IMS_C"/>
    <property type="match status" value="1"/>
</dbReference>
<dbReference type="Pfam" id="PF11798">
    <property type="entry name" value="IMS_HHH"/>
    <property type="match status" value="1"/>
</dbReference>
<dbReference type="SUPFAM" id="SSF56672">
    <property type="entry name" value="DNA/RNA polymerases"/>
    <property type="match status" value="1"/>
</dbReference>
<dbReference type="SUPFAM" id="SSF100879">
    <property type="entry name" value="Lesion bypass DNA polymerase (Y-family), little finger domain"/>
    <property type="match status" value="1"/>
</dbReference>
<dbReference type="PROSITE" id="PS50173">
    <property type="entry name" value="UMUC"/>
    <property type="match status" value="1"/>
</dbReference>
<organism>
    <name type="scientific">Mycoplasma genitalium (strain ATCC 33530 / DSM 19775 / NCTC 10195 / G37)</name>
    <name type="common">Mycoplasmoides genitalium</name>
    <dbReference type="NCBI Taxonomy" id="243273"/>
    <lineage>
        <taxon>Bacteria</taxon>
        <taxon>Bacillati</taxon>
        <taxon>Mycoplasmatota</taxon>
        <taxon>Mycoplasmoidales</taxon>
        <taxon>Mycoplasmoidaceae</taxon>
        <taxon>Mycoplasmoides</taxon>
    </lineage>
</organism>
<accession>Q49426</accession>
<comment type="similarity">
    <text evidence="2">Belongs to the DNA polymerase type-Y family.</text>
</comment>
<gene>
    <name type="ordered locus">MG360</name>
</gene>
<evidence type="ECO:0000255" key="1">
    <source>
        <dbReference type="PROSITE-ProRule" id="PRU00216"/>
    </source>
</evidence>
<evidence type="ECO:0000305" key="2"/>
<proteinExistence type="inferred from homology"/>
<sequence>MINTFTYFEPEYLIDKNLIFLYFDFDAFFASVEELENPELVNQPLIVGNRFSRSVVSTCNYVARSYGIRSGMSILKALELCPNAIFAHSNFRNYRKHSKRIFSVIESTFSLKIDVLSVDEGVACFQNISFKKAFLIAKKIKNFVFQNLRIKISIGISDHFLIAKIFSNQAKPFGIKSCSVKDIKKKLWPLPITEIPGIGEKHIDLVFKNNFYKINDLAVCEDASLLKKVFGNFWESLKAVSLGKWYTDNNNQVKSRSFAVSETLEDLNYSNNQLNKKLTQIFDQLFIRLQLSSQVCKGIVVQLKSNDFIVNSHSNKMKKYSNDYRKLLSITKRLFNRLLINTEKNVRLIGISFFDLKKIDTDEGQKKSLFYQFIPKSISKLSEESSLDKLIFDINESFGFEIIKRANKLKS</sequence>
<keyword id="KW-1185">Reference proteome</keyword>
<protein>
    <recommendedName>
        <fullName>Uncharacterized protein MG360</fullName>
    </recommendedName>
</protein>